<protein>
    <recommendedName>
        <fullName>Protein yae1</fullName>
    </recommendedName>
</protein>
<reference key="1">
    <citation type="journal article" date="2005" name="Nature">
        <title>Genomic sequence of the pathogenic and allergenic filamentous fungus Aspergillus fumigatus.</title>
        <authorList>
            <person name="Nierman W.C."/>
            <person name="Pain A."/>
            <person name="Anderson M.J."/>
            <person name="Wortman J.R."/>
            <person name="Kim H.S."/>
            <person name="Arroyo J."/>
            <person name="Berriman M."/>
            <person name="Abe K."/>
            <person name="Archer D.B."/>
            <person name="Bermejo C."/>
            <person name="Bennett J.W."/>
            <person name="Bowyer P."/>
            <person name="Chen D."/>
            <person name="Collins M."/>
            <person name="Coulsen R."/>
            <person name="Davies R."/>
            <person name="Dyer P.S."/>
            <person name="Farman M.L."/>
            <person name="Fedorova N."/>
            <person name="Fedorova N.D."/>
            <person name="Feldblyum T.V."/>
            <person name="Fischer R."/>
            <person name="Fosker N."/>
            <person name="Fraser A."/>
            <person name="Garcia J.L."/>
            <person name="Garcia M.J."/>
            <person name="Goble A."/>
            <person name="Goldman G.H."/>
            <person name="Gomi K."/>
            <person name="Griffith-Jones S."/>
            <person name="Gwilliam R."/>
            <person name="Haas B.J."/>
            <person name="Haas H."/>
            <person name="Harris D.E."/>
            <person name="Horiuchi H."/>
            <person name="Huang J."/>
            <person name="Humphray S."/>
            <person name="Jimenez J."/>
            <person name="Keller N."/>
            <person name="Khouri H."/>
            <person name="Kitamoto K."/>
            <person name="Kobayashi T."/>
            <person name="Konzack S."/>
            <person name="Kulkarni R."/>
            <person name="Kumagai T."/>
            <person name="Lafton A."/>
            <person name="Latge J.-P."/>
            <person name="Li W."/>
            <person name="Lord A."/>
            <person name="Lu C."/>
            <person name="Majoros W.H."/>
            <person name="May G.S."/>
            <person name="Miller B.L."/>
            <person name="Mohamoud Y."/>
            <person name="Molina M."/>
            <person name="Monod M."/>
            <person name="Mouyna I."/>
            <person name="Mulligan S."/>
            <person name="Murphy L.D."/>
            <person name="O'Neil S."/>
            <person name="Paulsen I."/>
            <person name="Penalva M.A."/>
            <person name="Pertea M."/>
            <person name="Price C."/>
            <person name="Pritchard B.L."/>
            <person name="Quail M.A."/>
            <person name="Rabbinowitsch E."/>
            <person name="Rawlins N."/>
            <person name="Rajandream M.A."/>
            <person name="Reichard U."/>
            <person name="Renauld H."/>
            <person name="Robson G.D."/>
            <person name="Rodriguez de Cordoba S."/>
            <person name="Rodriguez-Pena J.M."/>
            <person name="Ronning C.M."/>
            <person name="Rutter S."/>
            <person name="Salzberg S.L."/>
            <person name="Sanchez M."/>
            <person name="Sanchez-Ferrero J.C."/>
            <person name="Saunders D."/>
            <person name="Seeger K."/>
            <person name="Squares R."/>
            <person name="Squares S."/>
            <person name="Takeuchi M."/>
            <person name="Tekaia F."/>
            <person name="Turner G."/>
            <person name="Vazquez de Aldana C.R."/>
            <person name="Weidman J."/>
            <person name="White O."/>
            <person name="Woodward J.R."/>
            <person name="Yu J.-H."/>
            <person name="Fraser C.M."/>
            <person name="Galagan J.E."/>
            <person name="Asai K."/>
            <person name="Machida M."/>
            <person name="Hall N."/>
            <person name="Barrell B.G."/>
            <person name="Denning D.W."/>
        </authorList>
    </citation>
    <scope>NUCLEOTIDE SEQUENCE [LARGE SCALE GENOMIC DNA]</scope>
    <source>
        <strain>ATCC MYA-4609 / CBS 101355 / FGSC A1100 / Af293</strain>
    </source>
</reference>
<comment type="function">
    <text evidence="2">The complex LTO1:YAE1 may function as a target specific adapter that probably recruits apo-RPLI1 to the cytosolic iron-sulfur protein assembly (CIA) complex machinery. May be required for biogenesis of the large ribosomal subunit and initiation of translation.</text>
</comment>
<comment type="subunit">
    <text evidence="2">May form a complex with LTO1.</text>
</comment>
<comment type="subcellular location">
    <subcellularLocation>
        <location evidence="1">Cytoplasm</location>
    </subcellularLocation>
    <subcellularLocation>
        <location evidence="1">Nucleus</location>
    </subcellularLocation>
</comment>
<comment type="similarity">
    <text evidence="4">Belongs to the YAE1 family.</text>
</comment>
<proteinExistence type="inferred from homology"/>
<evidence type="ECO:0000250" key="1">
    <source>
        <dbReference type="UniProtKB" id="P47118"/>
    </source>
</evidence>
<evidence type="ECO:0000250" key="2">
    <source>
        <dbReference type="UniProtKB" id="Q9NRH1"/>
    </source>
</evidence>
<evidence type="ECO:0000256" key="3">
    <source>
        <dbReference type="SAM" id="MobiDB-lite"/>
    </source>
</evidence>
<evidence type="ECO:0000305" key="4"/>
<gene>
    <name type="primary">yae1</name>
    <name type="ORF">AFUA_3G07330</name>
</gene>
<organism>
    <name type="scientific">Aspergillus fumigatus (strain ATCC MYA-4609 / CBS 101355 / FGSC A1100 / Af293)</name>
    <name type="common">Neosartorya fumigata</name>
    <dbReference type="NCBI Taxonomy" id="330879"/>
    <lineage>
        <taxon>Eukaryota</taxon>
        <taxon>Fungi</taxon>
        <taxon>Dikarya</taxon>
        <taxon>Ascomycota</taxon>
        <taxon>Pezizomycotina</taxon>
        <taxon>Eurotiomycetes</taxon>
        <taxon>Eurotiomycetidae</taxon>
        <taxon>Eurotiales</taxon>
        <taxon>Aspergillaceae</taxon>
        <taxon>Aspergillus</taxon>
        <taxon>Aspergillus subgen. Fumigati</taxon>
    </lineage>
</organism>
<name>YAE1_ASPFU</name>
<feature type="chain" id="PRO_0000324419" description="Protein yae1">
    <location>
        <begin position="1"/>
        <end position="213"/>
    </location>
</feature>
<feature type="region of interest" description="Disordered" evidence="3">
    <location>
        <begin position="1"/>
        <end position="44"/>
    </location>
</feature>
<feature type="region of interest" description="deca-GX3 motif; required for interaction with LTO1" evidence="1">
    <location>
        <begin position="49"/>
        <end position="89"/>
    </location>
</feature>
<feature type="region of interest" description="Disordered" evidence="3">
    <location>
        <begin position="102"/>
        <end position="122"/>
    </location>
</feature>
<feature type="region of interest" description="Disordered" evidence="3">
    <location>
        <begin position="150"/>
        <end position="170"/>
    </location>
</feature>
<feature type="region of interest" description="Disordered" evidence="3">
    <location>
        <begin position="192"/>
        <end position="213"/>
    </location>
</feature>
<feature type="compositionally biased region" description="Basic and acidic residues" evidence="3">
    <location>
        <begin position="155"/>
        <end position="170"/>
    </location>
</feature>
<feature type="compositionally biased region" description="Basic and acidic residues" evidence="3">
    <location>
        <begin position="192"/>
        <end position="206"/>
    </location>
</feature>
<keyword id="KW-0963">Cytoplasm</keyword>
<keyword id="KW-0539">Nucleus</keyword>
<keyword id="KW-1185">Reference proteome</keyword>
<dbReference type="EMBL" id="AAHF01000002">
    <property type="protein sequence ID" value="EAL92838.1"/>
    <property type="molecule type" value="Genomic_DNA"/>
</dbReference>
<dbReference type="RefSeq" id="XP_754876.1">
    <property type="nucleotide sequence ID" value="XM_749783.1"/>
</dbReference>
<dbReference type="STRING" id="330879.Q4WWW5"/>
<dbReference type="EnsemblFungi" id="EAL92838">
    <property type="protein sequence ID" value="EAL92838"/>
    <property type="gene ID" value="AFUA_3G07330"/>
</dbReference>
<dbReference type="GeneID" id="3512109"/>
<dbReference type="KEGG" id="afm:AFUA_3G07330"/>
<dbReference type="VEuPathDB" id="FungiDB:Afu3g07330"/>
<dbReference type="eggNOG" id="KOG4774">
    <property type="taxonomic scope" value="Eukaryota"/>
</dbReference>
<dbReference type="HOGENOM" id="CLU_066684_1_1_1"/>
<dbReference type="InParanoid" id="Q4WWW5"/>
<dbReference type="OMA" id="AHVQEGF"/>
<dbReference type="OrthoDB" id="20086at2759"/>
<dbReference type="Proteomes" id="UP000002530">
    <property type="component" value="Chromosome 3"/>
</dbReference>
<dbReference type="GO" id="GO:0005737">
    <property type="term" value="C:cytoplasm"/>
    <property type="evidence" value="ECO:0007669"/>
    <property type="project" value="UniProtKB-SubCell"/>
</dbReference>
<dbReference type="GO" id="GO:0005634">
    <property type="term" value="C:nucleus"/>
    <property type="evidence" value="ECO:0007669"/>
    <property type="project" value="UniProtKB-SubCell"/>
</dbReference>
<dbReference type="GO" id="GO:0051604">
    <property type="term" value="P:protein maturation"/>
    <property type="evidence" value="ECO:0000250"/>
    <property type="project" value="UniProtKB"/>
</dbReference>
<dbReference type="InterPro" id="IPR019191">
    <property type="entry name" value="Essential_protein_Yae1_N"/>
</dbReference>
<dbReference type="InterPro" id="IPR038881">
    <property type="entry name" value="Yae1-like"/>
</dbReference>
<dbReference type="PANTHER" id="PTHR18829">
    <property type="entry name" value="PROTEIN YAE1 HOMOLOG"/>
    <property type="match status" value="1"/>
</dbReference>
<dbReference type="PANTHER" id="PTHR18829:SF0">
    <property type="entry name" value="PROTEIN YAE1 HOMOLOG"/>
    <property type="match status" value="1"/>
</dbReference>
<dbReference type="Pfam" id="PF09811">
    <property type="entry name" value="Yae1_N"/>
    <property type="match status" value="1"/>
</dbReference>
<accession>Q4WWW5</accession>
<sequence>MTSPQTNSLDDIFGSSPPHEGEKFSQQASIEAPEPSDLPSLRRQHVTAGYRDGVSAAKGEHVQHGFDAGFPIGAQLGMRAGTVIGIIEGLLRGFESPTASRAVKKPLQRKEEGQGVETDEAEAARQAKREQLLRLYQKAVKELEVRSVFAGSEEESTRDNGGQEKPEVVLRRKGDAVISQWEEQVRVAHWEENMAALEPKEDEKRASTPTEQI</sequence>